<protein>
    <recommendedName>
        <fullName evidence="1">Elongation factor G 1</fullName>
        <shortName evidence="1">EF-G 1</shortName>
    </recommendedName>
</protein>
<name>EFG1_PSEA6</name>
<feature type="chain" id="PRO_0000263484" description="Elongation factor G 1">
    <location>
        <begin position="1"/>
        <end position="695"/>
    </location>
</feature>
<feature type="domain" description="tr-type G">
    <location>
        <begin position="5"/>
        <end position="280"/>
    </location>
</feature>
<feature type="binding site" evidence="1">
    <location>
        <begin position="14"/>
        <end position="21"/>
    </location>
    <ligand>
        <name>GTP</name>
        <dbReference type="ChEBI" id="CHEBI:37565"/>
    </ligand>
</feature>
<feature type="binding site" evidence="1">
    <location>
        <begin position="78"/>
        <end position="82"/>
    </location>
    <ligand>
        <name>GTP</name>
        <dbReference type="ChEBI" id="CHEBI:37565"/>
    </ligand>
</feature>
<feature type="binding site" evidence="1">
    <location>
        <begin position="132"/>
        <end position="135"/>
    </location>
    <ligand>
        <name>GTP</name>
        <dbReference type="ChEBI" id="CHEBI:37565"/>
    </ligand>
</feature>
<sequence>MKDLARYRNIGIFAHVDAGKTTTTERILKLTGQIHKTGEVHDGESTTDFMEQEAERGITIQSAAVSCFWKDHRFNVIDTPGHVDFTVEVYRSLKVLDGGIGVFCGSGGVEPQSETNWRYANDSEVARIIFVNKLDRMGADFYRVVDQTKKVLGANPLVMVLPIGIEDDFVGVVDLLTRKAFIWDDTGLPENYEITDVPADMVDKVEEYREMLIETAVEQDDDLMMAYMDGEEPSMEDIKRCIRKGTRTMDFFPTYCGSAFKNKGVQNILDAVVDYLPSPTEVDPQPLTDEEGEPNGKYAIVSPDETFKALAFKITDDRFGALTFVRIYSGTLKKGDTILNAATGKTERIGRMCEMQADDRNELTSAQAGDIIAIVGMKSNVQTGHTLCDPKDPIILEAMVFPEPVISISVTPKDKGSTEKMGLAIGKMVAEDPTFRVETDQDSGETILSGMGELHLDIKVDILKRTYGVELEVGEPQVAYRETITQEVEDSYTHKKQSGGSGQFGKIDYRIKPGEPNSGFTFSSVVVGGNVPKEFFPAIEKGFASMMESGVLAGFPVLDVEVELYDGGFHAVDSSAVAFEIAAKGAFRQSIPKAGPQLIEPIMKVDVFTPDDHVGDVIGDLNRRRGMIKDQEAGVTGVRVKADIPLSEMFGYIGSLRTMTSGRGQFSMEFSHYSPCPNNVAEKVIADTKERNAKK</sequence>
<dbReference type="EMBL" id="CP000388">
    <property type="protein sequence ID" value="ABG38994.1"/>
    <property type="molecule type" value="Genomic_DNA"/>
</dbReference>
<dbReference type="RefSeq" id="WP_011573387.1">
    <property type="nucleotide sequence ID" value="NC_008228.1"/>
</dbReference>
<dbReference type="SMR" id="Q15YP4"/>
<dbReference type="STRING" id="342610.Patl_0464"/>
<dbReference type="KEGG" id="pat:Patl_0464"/>
<dbReference type="eggNOG" id="COG0480">
    <property type="taxonomic scope" value="Bacteria"/>
</dbReference>
<dbReference type="HOGENOM" id="CLU_002794_4_1_6"/>
<dbReference type="OrthoDB" id="9804431at2"/>
<dbReference type="Proteomes" id="UP000001981">
    <property type="component" value="Chromosome"/>
</dbReference>
<dbReference type="GO" id="GO:0005737">
    <property type="term" value="C:cytoplasm"/>
    <property type="evidence" value="ECO:0007669"/>
    <property type="project" value="UniProtKB-SubCell"/>
</dbReference>
<dbReference type="GO" id="GO:0005525">
    <property type="term" value="F:GTP binding"/>
    <property type="evidence" value="ECO:0007669"/>
    <property type="project" value="UniProtKB-UniRule"/>
</dbReference>
<dbReference type="GO" id="GO:0003924">
    <property type="term" value="F:GTPase activity"/>
    <property type="evidence" value="ECO:0007669"/>
    <property type="project" value="InterPro"/>
</dbReference>
<dbReference type="GO" id="GO:0097216">
    <property type="term" value="F:guanosine tetraphosphate binding"/>
    <property type="evidence" value="ECO:0007669"/>
    <property type="project" value="UniProtKB-ARBA"/>
</dbReference>
<dbReference type="GO" id="GO:0003746">
    <property type="term" value="F:translation elongation factor activity"/>
    <property type="evidence" value="ECO:0007669"/>
    <property type="project" value="UniProtKB-UniRule"/>
</dbReference>
<dbReference type="GO" id="GO:0032790">
    <property type="term" value="P:ribosome disassembly"/>
    <property type="evidence" value="ECO:0007669"/>
    <property type="project" value="TreeGrafter"/>
</dbReference>
<dbReference type="CDD" id="cd01886">
    <property type="entry name" value="EF-G"/>
    <property type="match status" value="1"/>
</dbReference>
<dbReference type="CDD" id="cd16262">
    <property type="entry name" value="EFG_III"/>
    <property type="match status" value="1"/>
</dbReference>
<dbReference type="CDD" id="cd01434">
    <property type="entry name" value="EFG_mtEFG1_IV"/>
    <property type="match status" value="1"/>
</dbReference>
<dbReference type="CDD" id="cd03713">
    <property type="entry name" value="EFG_mtEFG_C"/>
    <property type="match status" value="1"/>
</dbReference>
<dbReference type="CDD" id="cd04088">
    <property type="entry name" value="EFG_mtEFG_II"/>
    <property type="match status" value="1"/>
</dbReference>
<dbReference type="FunFam" id="2.40.30.10:FF:000006">
    <property type="entry name" value="Elongation factor G"/>
    <property type="match status" value="1"/>
</dbReference>
<dbReference type="FunFam" id="3.30.230.10:FF:000003">
    <property type="entry name" value="Elongation factor G"/>
    <property type="match status" value="1"/>
</dbReference>
<dbReference type="FunFam" id="3.30.70.240:FF:000001">
    <property type="entry name" value="Elongation factor G"/>
    <property type="match status" value="1"/>
</dbReference>
<dbReference type="FunFam" id="3.30.70.870:FF:000006">
    <property type="entry name" value="Elongation factor G"/>
    <property type="match status" value="1"/>
</dbReference>
<dbReference type="FunFam" id="3.40.50.300:FF:000029">
    <property type="entry name" value="Elongation factor G"/>
    <property type="match status" value="1"/>
</dbReference>
<dbReference type="Gene3D" id="3.30.230.10">
    <property type="match status" value="1"/>
</dbReference>
<dbReference type="Gene3D" id="3.30.70.240">
    <property type="match status" value="1"/>
</dbReference>
<dbReference type="Gene3D" id="3.30.70.870">
    <property type="entry name" value="Elongation Factor G (Translational Gtpase), domain 3"/>
    <property type="match status" value="1"/>
</dbReference>
<dbReference type="Gene3D" id="3.40.50.300">
    <property type="entry name" value="P-loop containing nucleotide triphosphate hydrolases"/>
    <property type="match status" value="1"/>
</dbReference>
<dbReference type="Gene3D" id="2.40.30.10">
    <property type="entry name" value="Translation factors"/>
    <property type="match status" value="1"/>
</dbReference>
<dbReference type="HAMAP" id="MF_00054_B">
    <property type="entry name" value="EF_G_EF_2_B"/>
    <property type="match status" value="1"/>
</dbReference>
<dbReference type="InterPro" id="IPR041095">
    <property type="entry name" value="EFG_II"/>
</dbReference>
<dbReference type="InterPro" id="IPR009022">
    <property type="entry name" value="EFG_III"/>
</dbReference>
<dbReference type="InterPro" id="IPR035647">
    <property type="entry name" value="EFG_III/V"/>
</dbReference>
<dbReference type="InterPro" id="IPR047872">
    <property type="entry name" value="EFG_IV"/>
</dbReference>
<dbReference type="InterPro" id="IPR035649">
    <property type="entry name" value="EFG_V"/>
</dbReference>
<dbReference type="InterPro" id="IPR000640">
    <property type="entry name" value="EFG_V-like"/>
</dbReference>
<dbReference type="InterPro" id="IPR004161">
    <property type="entry name" value="EFTu-like_2"/>
</dbReference>
<dbReference type="InterPro" id="IPR031157">
    <property type="entry name" value="G_TR_CS"/>
</dbReference>
<dbReference type="InterPro" id="IPR027417">
    <property type="entry name" value="P-loop_NTPase"/>
</dbReference>
<dbReference type="InterPro" id="IPR020568">
    <property type="entry name" value="Ribosomal_Su5_D2-typ_SF"/>
</dbReference>
<dbReference type="InterPro" id="IPR014721">
    <property type="entry name" value="Ribsml_uS5_D2-typ_fold_subgr"/>
</dbReference>
<dbReference type="InterPro" id="IPR005225">
    <property type="entry name" value="Small_GTP-bd"/>
</dbReference>
<dbReference type="InterPro" id="IPR000795">
    <property type="entry name" value="T_Tr_GTP-bd_dom"/>
</dbReference>
<dbReference type="InterPro" id="IPR009000">
    <property type="entry name" value="Transl_B-barrel_sf"/>
</dbReference>
<dbReference type="InterPro" id="IPR004540">
    <property type="entry name" value="Transl_elong_EFG/EF2"/>
</dbReference>
<dbReference type="InterPro" id="IPR005517">
    <property type="entry name" value="Transl_elong_EFG/EF2_IV"/>
</dbReference>
<dbReference type="NCBIfam" id="TIGR00484">
    <property type="entry name" value="EF-G"/>
    <property type="match status" value="1"/>
</dbReference>
<dbReference type="NCBIfam" id="NF009381">
    <property type="entry name" value="PRK12740.1-5"/>
    <property type="match status" value="1"/>
</dbReference>
<dbReference type="NCBIfam" id="TIGR00231">
    <property type="entry name" value="small_GTP"/>
    <property type="match status" value="1"/>
</dbReference>
<dbReference type="PANTHER" id="PTHR43261:SF5">
    <property type="entry name" value="ELONGATION FACTOR G 1"/>
    <property type="match status" value="1"/>
</dbReference>
<dbReference type="PANTHER" id="PTHR43261">
    <property type="entry name" value="TRANSLATION ELONGATION FACTOR G-RELATED"/>
    <property type="match status" value="1"/>
</dbReference>
<dbReference type="Pfam" id="PF00679">
    <property type="entry name" value="EFG_C"/>
    <property type="match status" value="1"/>
</dbReference>
<dbReference type="Pfam" id="PF14492">
    <property type="entry name" value="EFG_III"/>
    <property type="match status" value="1"/>
</dbReference>
<dbReference type="Pfam" id="PF03764">
    <property type="entry name" value="EFG_IV"/>
    <property type="match status" value="1"/>
</dbReference>
<dbReference type="Pfam" id="PF00009">
    <property type="entry name" value="GTP_EFTU"/>
    <property type="match status" value="1"/>
</dbReference>
<dbReference type="Pfam" id="PF03144">
    <property type="entry name" value="GTP_EFTU_D2"/>
    <property type="match status" value="1"/>
</dbReference>
<dbReference type="PRINTS" id="PR00315">
    <property type="entry name" value="ELONGATNFCT"/>
</dbReference>
<dbReference type="SMART" id="SM00838">
    <property type="entry name" value="EFG_C"/>
    <property type="match status" value="1"/>
</dbReference>
<dbReference type="SMART" id="SM00889">
    <property type="entry name" value="EFG_IV"/>
    <property type="match status" value="1"/>
</dbReference>
<dbReference type="SUPFAM" id="SSF54980">
    <property type="entry name" value="EF-G C-terminal domain-like"/>
    <property type="match status" value="2"/>
</dbReference>
<dbReference type="SUPFAM" id="SSF52540">
    <property type="entry name" value="P-loop containing nucleoside triphosphate hydrolases"/>
    <property type="match status" value="1"/>
</dbReference>
<dbReference type="SUPFAM" id="SSF54211">
    <property type="entry name" value="Ribosomal protein S5 domain 2-like"/>
    <property type="match status" value="1"/>
</dbReference>
<dbReference type="SUPFAM" id="SSF50447">
    <property type="entry name" value="Translation proteins"/>
    <property type="match status" value="1"/>
</dbReference>
<dbReference type="PROSITE" id="PS00301">
    <property type="entry name" value="G_TR_1"/>
    <property type="match status" value="1"/>
</dbReference>
<dbReference type="PROSITE" id="PS51722">
    <property type="entry name" value="G_TR_2"/>
    <property type="match status" value="1"/>
</dbReference>
<organism>
    <name type="scientific">Pseudoalteromonas atlantica (strain T6c / ATCC BAA-1087)</name>
    <dbReference type="NCBI Taxonomy" id="3042615"/>
    <lineage>
        <taxon>Bacteria</taxon>
        <taxon>Pseudomonadati</taxon>
        <taxon>Pseudomonadota</taxon>
        <taxon>Gammaproteobacteria</taxon>
        <taxon>Alteromonadales</taxon>
        <taxon>Alteromonadaceae</taxon>
        <taxon>Paraglaciecola</taxon>
    </lineage>
</organism>
<keyword id="KW-0963">Cytoplasm</keyword>
<keyword id="KW-0251">Elongation factor</keyword>
<keyword id="KW-0342">GTP-binding</keyword>
<keyword id="KW-0547">Nucleotide-binding</keyword>
<keyword id="KW-0648">Protein biosynthesis</keyword>
<gene>
    <name evidence="1" type="primary">fusA1</name>
    <name type="ordered locus">Patl_0464</name>
</gene>
<evidence type="ECO:0000255" key="1">
    <source>
        <dbReference type="HAMAP-Rule" id="MF_00054"/>
    </source>
</evidence>
<accession>Q15YP4</accession>
<proteinExistence type="inferred from homology"/>
<reference key="1">
    <citation type="submission" date="2006-06" db="EMBL/GenBank/DDBJ databases">
        <title>Complete sequence of Pseudoalteromonas atlantica T6c.</title>
        <authorList>
            <consortium name="US DOE Joint Genome Institute"/>
            <person name="Copeland A."/>
            <person name="Lucas S."/>
            <person name="Lapidus A."/>
            <person name="Barry K."/>
            <person name="Detter J.C."/>
            <person name="Glavina del Rio T."/>
            <person name="Hammon N."/>
            <person name="Israni S."/>
            <person name="Dalin E."/>
            <person name="Tice H."/>
            <person name="Pitluck S."/>
            <person name="Saunders E."/>
            <person name="Brettin T."/>
            <person name="Bruce D."/>
            <person name="Han C."/>
            <person name="Tapia R."/>
            <person name="Gilna P."/>
            <person name="Schmutz J."/>
            <person name="Larimer F."/>
            <person name="Land M."/>
            <person name="Hauser L."/>
            <person name="Kyrpides N."/>
            <person name="Kim E."/>
            <person name="Karls A.C."/>
            <person name="Bartlett D."/>
            <person name="Higgins B.P."/>
            <person name="Richardson P."/>
        </authorList>
    </citation>
    <scope>NUCLEOTIDE SEQUENCE [LARGE SCALE GENOMIC DNA]</scope>
    <source>
        <strain>T6c / ATCC BAA-1087</strain>
    </source>
</reference>
<comment type="function">
    <text evidence="1">Catalyzes the GTP-dependent ribosomal translocation step during translation elongation. During this step, the ribosome changes from the pre-translocational (PRE) to the post-translocational (POST) state as the newly formed A-site-bound peptidyl-tRNA and P-site-bound deacylated tRNA move to the P and E sites, respectively. Catalyzes the coordinated movement of the two tRNA molecules, the mRNA and conformational changes in the ribosome.</text>
</comment>
<comment type="subcellular location">
    <subcellularLocation>
        <location evidence="1">Cytoplasm</location>
    </subcellularLocation>
</comment>
<comment type="similarity">
    <text evidence="1">Belongs to the TRAFAC class translation factor GTPase superfamily. Classic translation factor GTPase family. EF-G/EF-2 subfamily.</text>
</comment>